<evidence type="ECO:0000255" key="1">
    <source>
        <dbReference type="HAMAP-Rule" id="MF_01325"/>
    </source>
</evidence>
<evidence type="ECO:0000305" key="2"/>
<proteinExistence type="inferred from homology"/>
<gene>
    <name evidence="1" type="primary">rplC</name>
    <name type="ordered locus">SeSA_A3636</name>
</gene>
<name>RL3_SALSV</name>
<keyword id="KW-0488">Methylation</keyword>
<keyword id="KW-0687">Ribonucleoprotein</keyword>
<keyword id="KW-0689">Ribosomal protein</keyword>
<keyword id="KW-0694">RNA-binding</keyword>
<keyword id="KW-0699">rRNA-binding</keyword>
<accession>B4TXE2</accession>
<sequence length="209" mass="22248">MIGLVGKKVGMTRIFTEDGVSIPVTVIEVEANRVTQVKDLANDGYRAVQVTTGAKKANRVTKPEAGHFAKAGVEAGRGLWEFRLAEGEEYTVGQSISVELFADVKKVDVTGTSKGKGFAGTVKRWNFRTQDATHGNSLSHRVPGSIGQNQTPGKVFKGKKMAGQMGNERVTVQSLDVVRVDAERNLLLVKGGVPGATGCDLIVKPAVKA</sequence>
<comment type="function">
    <text evidence="1">One of the primary rRNA binding proteins, it binds directly near the 3'-end of the 23S rRNA, where it nucleates assembly of the 50S subunit.</text>
</comment>
<comment type="subunit">
    <text evidence="1">Part of the 50S ribosomal subunit. Forms a cluster with proteins L14 and L19.</text>
</comment>
<comment type="PTM">
    <text evidence="1">Methylated by PrmB.</text>
</comment>
<comment type="similarity">
    <text evidence="1">Belongs to the universal ribosomal protein uL3 family.</text>
</comment>
<dbReference type="EMBL" id="CP001127">
    <property type="protein sequence ID" value="ACF91857.1"/>
    <property type="molecule type" value="Genomic_DNA"/>
</dbReference>
<dbReference type="RefSeq" id="WP_000579838.1">
    <property type="nucleotide sequence ID" value="NC_011094.1"/>
</dbReference>
<dbReference type="SMR" id="B4TXE2"/>
<dbReference type="KEGG" id="sew:SeSA_A3636"/>
<dbReference type="HOGENOM" id="CLU_044142_4_1_6"/>
<dbReference type="Proteomes" id="UP000001865">
    <property type="component" value="Chromosome"/>
</dbReference>
<dbReference type="GO" id="GO:0022625">
    <property type="term" value="C:cytosolic large ribosomal subunit"/>
    <property type="evidence" value="ECO:0007669"/>
    <property type="project" value="TreeGrafter"/>
</dbReference>
<dbReference type="GO" id="GO:0019843">
    <property type="term" value="F:rRNA binding"/>
    <property type="evidence" value="ECO:0007669"/>
    <property type="project" value="UniProtKB-UniRule"/>
</dbReference>
<dbReference type="GO" id="GO:0003735">
    <property type="term" value="F:structural constituent of ribosome"/>
    <property type="evidence" value="ECO:0007669"/>
    <property type="project" value="InterPro"/>
</dbReference>
<dbReference type="GO" id="GO:0006412">
    <property type="term" value="P:translation"/>
    <property type="evidence" value="ECO:0007669"/>
    <property type="project" value="UniProtKB-UniRule"/>
</dbReference>
<dbReference type="FunFam" id="2.40.30.10:FF:000004">
    <property type="entry name" value="50S ribosomal protein L3"/>
    <property type="match status" value="1"/>
</dbReference>
<dbReference type="FunFam" id="3.30.160.810:FF:000001">
    <property type="entry name" value="50S ribosomal protein L3"/>
    <property type="match status" value="1"/>
</dbReference>
<dbReference type="Gene3D" id="3.30.160.810">
    <property type="match status" value="1"/>
</dbReference>
<dbReference type="Gene3D" id="2.40.30.10">
    <property type="entry name" value="Translation factors"/>
    <property type="match status" value="1"/>
</dbReference>
<dbReference type="HAMAP" id="MF_01325_B">
    <property type="entry name" value="Ribosomal_uL3_B"/>
    <property type="match status" value="1"/>
</dbReference>
<dbReference type="InterPro" id="IPR000597">
    <property type="entry name" value="Ribosomal_uL3"/>
</dbReference>
<dbReference type="InterPro" id="IPR019927">
    <property type="entry name" value="Ribosomal_uL3_bac/org-type"/>
</dbReference>
<dbReference type="InterPro" id="IPR019926">
    <property type="entry name" value="Ribosomal_uL3_CS"/>
</dbReference>
<dbReference type="InterPro" id="IPR009000">
    <property type="entry name" value="Transl_B-barrel_sf"/>
</dbReference>
<dbReference type="NCBIfam" id="TIGR03625">
    <property type="entry name" value="L3_bact"/>
    <property type="match status" value="1"/>
</dbReference>
<dbReference type="PANTHER" id="PTHR11229">
    <property type="entry name" value="50S RIBOSOMAL PROTEIN L3"/>
    <property type="match status" value="1"/>
</dbReference>
<dbReference type="PANTHER" id="PTHR11229:SF16">
    <property type="entry name" value="LARGE RIBOSOMAL SUBUNIT PROTEIN UL3C"/>
    <property type="match status" value="1"/>
</dbReference>
<dbReference type="Pfam" id="PF00297">
    <property type="entry name" value="Ribosomal_L3"/>
    <property type="match status" value="1"/>
</dbReference>
<dbReference type="SUPFAM" id="SSF50447">
    <property type="entry name" value="Translation proteins"/>
    <property type="match status" value="1"/>
</dbReference>
<dbReference type="PROSITE" id="PS00474">
    <property type="entry name" value="RIBOSOMAL_L3"/>
    <property type="match status" value="1"/>
</dbReference>
<feature type="chain" id="PRO_1000141919" description="Large ribosomal subunit protein uL3">
    <location>
        <begin position="1"/>
        <end position="209"/>
    </location>
</feature>
<feature type="modified residue" description="N5-methylglutamine" evidence="1">
    <location>
        <position position="150"/>
    </location>
</feature>
<protein>
    <recommendedName>
        <fullName evidence="1">Large ribosomal subunit protein uL3</fullName>
    </recommendedName>
    <alternativeName>
        <fullName evidence="2">50S ribosomal protein L3</fullName>
    </alternativeName>
</protein>
<organism>
    <name type="scientific">Salmonella schwarzengrund (strain CVM19633)</name>
    <dbReference type="NCBI Taxonomy" id="439843"/>
    <lineage>
        <taxon>Bacteria</taxon>
        <taxon>Pseudomonadati</taxon>
        <taxon>Pseudomonadota</taxon>
        <taxon>Gammaproteobacteria</taxon>
        <taxon>Enterobacterales</taxon>
        <taxon>Enterobacteriaceae</taxon>
        <taxon>Salmonella</taxon>
    </lineage>
</organism>
<reference key="1">
    <citation type="journal article" date="2011" name="J. Bacteriol.">
        <title>Comparative genomics of 28 Salmonella enterica isolates: evidence for CRISPR-mediated adaptive sublineage evolution.</title>
        <authorList>
            <person name="Fricke W.F."/>
            <person name="Mammel M.K."/>
            <person name="McDermott P.F."/>
            <person name="Tartera C."/>
            <person name="White D.G."/>
            <person name="Leclerc J.E."/>
            <person name="Ravel J."/>
            <person name="Cebula T.A."/>
        </authorList>
    </citation>
    <scope>NUCLEOTIDE SEQUENCE [LARGE SCALE GENOMIC DNA]</scope>
    <source>
        <strain>CVM19633</strain>
    </source>
</reference>